<proteinExistence type="predicted"/>
<organismHost>
    <name type="scientific">Mycobacterium</name>
    <dbReference type="NCBI Taxonomy" id="1763"/>
</organismHost>
<sequence>MPAKNFRRIPDQTDDQGFLIPGYSAWDCQRCGGEVCRYYGQSDVDCPNCGACYNASGQRLRDDWRGNPSAYDDEVGDLEGFETQHSDY</sequence>
<reference key="1">
    <citation type="journal article" date="1993" name="Mol. Microbiol.">
        <title>DNA sequence, structure and gene expression of mycobacteriophage L5: a phage system for mycobacterial genetics.</title>
        <authorList>
            <person name="Hatfull G.F."/>
            <person name="Sarkis G.J."/>
        </authorList>
    </citation>
    <scope>NUCLEOTIDE SEQUENCE [LARGE SCALE GENOMIC DNA]</scope>
</reference>
<evidence type="ECO:0000256" key="1">
    <source>
        <dbReference type="SAM" id="MobiDB-lite"/>
    </source>
</evidence>
<dbReference type="EMBL" id="Z18946">
    <property type="protein sequence ID" value="CAA79462.1"/>
    <property type="molecule type" value="Genomic_DNA"/>
</dbReference>
<dbReference type="PIR" id="S31031">
    <property type="entry name" value="S31031"/>
</dbReference>
<dbReference type="RefSeq" id="NP_039750.1">
    <property type="nucleotide sequence ID" value="NC_001335.1"/>
</dbReference>
<dbReference type="GeneID" id="2942903"/>
<dbReference type="KEGG" id="vg:2942903"/>
<dbReference type="OrthoDB" id="17785at10239"/>
<dbReference type="Proteomes" id="UP000002123">
    <property type="component" value="Genome"/>
</dbReference>
<protein>
    <recommendedName>
        <fullName>Gene 86 protein</fullName>
    </recommendedName>
    <alternativeName>
        <fullName>Gp86</fullName>
    </alternativeName>
</protein>
<name>VG86_BPML5</name>
<feature type="chain" id="PRO_0000164831" description="Gene 86 protein">
    <location>
        <begin position="1"/>
        <end position="88"/>
    </location>
</feature>
<feature type="region of interest" description="Disordered" evidence="1">
    <location>
        <begin position="64"/>
        <end position="88"/>
    </location>
</feature>
<feature type="compositionally biased region" description="Acidic residues" evidence="1">
    <location>
        <begin position="71"/>
        <end position="80"/>
    </location>
</feature>
<keyword id="KW-1185">Reference proteome</keyword>
<accession>Q05303</accession>
<organism>
    <name type="scientific">Mycobacterium phage L5</name>
    <name type="common">Mycobacteriophage L5</name>
    <dbReference type="NCBI Taxonomy" id="31757"/>
    <lineage>
        <taxon>Viruses</taxon>
        <taxon>Duplodnaviria</taxon>
        <taxon>Heunggongvirae</taxon>
        <taxon>Uroviricota</taxon>
        <taxon>Caudoviricetes</taxon>
        <taxon>Fromanvirus</taxon>
    </lineage>
</organism>
<gene>
    <name type="primary">86</name>
</gene>